<protein>
    <recommendedName>
        <fullName>Histone H1C</fullName>
    </recommendedName>
    <alternativeName>
        <fullName>Clone XLHW2</fullName>
    </alternativeName>
</protein>
<name>H1C1_XENLA</name>
<feature type="initiator methionine" description="Removed" evidence="1">
    <location>
        <position position="1"/>
    </location>
</feature>
<feature type="chain" id="PRO_0000195935" description="Histone H1C">
    <location>
        <begin position="2"/>
        <end position="217"/>
    </location>
</feature>
<feature type="domain" description="H15" evidence="2">
    <location>
        <begin position="40"/>
        <end position="113"/>
    </location>
</feature>
<feature type="region of interest" description="Disordered" evidence="3">
    <location>
        <begin position="1"/>
        <end position="45"/>
    </location>
</feature>
<feature type="region of interest" description="Disordered" evidence="3">
    <location>
        <begin position="123"/>
        <end position="217"/>
    </location>
</feature>
<feature type="compositionally biased region" description="Low complexity" evidence="3">
    <location>
        <begin position="1"/>
        <end position="11"/>
    </location>
</feature>
<feature type="compositionally biased region" description="Low complexity" evidence="3">
    <location>
        <begin position="28"/>
        <end position="45"/>
    </location>
</feature>
<feature type="compositionally biased region" description="Basic residues" evidence="3">
    <location>
        <begin position="123"/>
        <end position="151"/>
    </location>
</feature>
<feature type="compositionally biased region" description="Basic residues" evidence="3">
    <location>
        <begin position="159"/>
        <end position="217"/>
    </location>
</feature>
<dbReference type="EMBL" id="J00968">
    <property type="status" value="NOT_ANNOTATED_CDS"/>
    <property type="molecule type" value="Genomic_DNA"/>
</dbReference>
<dbReference type="SMR" id="P15866"/>
<dbReference type="Proteomes" id="UP000186698">
    <property type="component" value="Unplaced"/>
</dbReference>
<dbReference type="GO" id="GO:0000786">
    <property type="term" value="C:nucleosome"/>
    <property type="evidence" value="ECO:0007669"/>
    <property type="project" value="InterPro"/>
</dbReference>
<dbReference type="GO" id="GO:0005634">
    <property type="term" value="C:nucleus"/>
    <property type="evidence" value="ECO:0007669"/>
    <property type="project" value="UniProtKB-SubCell"/>
</dbReference>
<dbReference type="GO" id="GO:0003677">
    <property type="term" value="F:DNA binding"/>
    <property type="evidence" value="ECO:0007669"/>
    <property type="project" value="UniProtKB-KW"/>
</dbReference>
<dbReference type="GO" id="GO:0030527">
    <property type="term" value="F:structural constituent of chromatin"/>
    <property type="evidence" value="ECO:0007669"/>
    <property type="project" value="InterPro"/>
</dbReference>
<dbReference type="GO" id="GO:0006334">
    <property type="term" value="P:nucleosome assembly"/>
    <property type="evidence" value="ECO:0007669"/>
    <property type="project" value="InterPro"/>
</dbReference>
<dbReference type="CDD" id="cd00073">
    <property type="entry name" value="H15"/>
    <property type="match status" value="1"/>
</dbReference>
<dbReference type="FunFam" id="1.10.10.10:FF:000075">
    <property type="entry name" value="Histone H1 like"/>
    <property type="match status" value="1"/>
</dbReference>
<dbReference type="Gene3D" id="1.10.10.10">
    <property type="entry name" value="Winged helix-like DNA-binding domain superfamily/Winged helix DNA-binding domain"/>
    <property type="match status" value="1"/>
</dbReference>
<dbReference type="InterPro" id="IPR005819">
    <property type="entry name" value="H1/H5"/>
</dbReference>
<dbReference type="InterPro" id="IPR005818">
    <property type="entry name" value="Histone_H1/H5_H15"/>
</dbReference>
<dbReference type="InterPro" id="IPR036388">
    <property type="entry name" value="WH-like_DNA-bd_sf"/>
</dbReference>
<dbReference type="InterPro" id="IPR036390">
    <property type="entry name" value="WH_DNA-bd_sf"/>
</dbReference>
<dbReference type="Pfam" id="PF00538">
    <property type="entry name" value="Linker_histone"/>
    <property type="match status" value="1"/>
</dbReference>
<dbReference type="PRINTS" id="PR00624">
    <property type="entry name" value="HISTONEH5"/>
</dbReference>
<dbReference type="SMART" id="SM00526">
    <property type="entry name" value="H15"/>
    <property type="match status" value="1"/>
</dbReference>
<dbReference type="SUPFAM" id="SSF46785">
    <property type="entry name" value="Winged helix' DNA-binding domain"/>
    <property type="match status" value="1"/>
</dbReference>
<dbReference type="PROSITE" id="PS51504">
    <property type="entry name" value="H15"/>
    <property type="match status" value="1"/>
</dbReference>
<accession>P15866</accession>
<evidence type="ECO:0000250" key="1"/>
<evidence type="ECO:0000255" key="2">
    <source>
        <dbReference type="PROSITE-ProRule" id="PRU00837"/>
    </source>
</evidence>
<evidence type="ECO:0000256" key="3">
    <source>
        <dbReference type="SAM" id="MobiDB-lite"/>
    </source>
</evidence>
<sequence length="217" mass="22345">MAETASTETTPAAPPAEPKQKKKKQQPKKAAGGAKAKKPSGPSASELIVKSVSASKERGGVSLAALKKALAAGGYDVERNNSRLKLALKALVTKGTLTQVKGSGASGSFKLNKKQLETKVKAVAKKKLVAPKAKKPVTAKKKPKSPKKPKKVSAAAAKSPKKAKKPVKAAKSPKKPKAVKSKKVTKSPAKKATKPKAAKAKIAKAKAAKGKKAAAKK</sequence>
<keyword id="KW-0158">Chromosome</keyword>
<keyword id="KW-0238">DNA-binding</keyword>
<keyword id="KW-0539">Nucleus</keyword>
<keyword id="KW-1185">Reference proteome</keyword>
<organism>
    <name type="scientific">Xenopus laevis</name>
    <name type="common">African clawed frog</name>
    <dbReference type="NCBI Taxonomy" id="8355"/>
    <lineage>
        <taxon>Eukaryota</taxon>
        <taxon>Metazoa</taxon>
        <taxon>Chordata</taxon>
        <taxon>Craniata</taxon>
        <taxon>Vertebrata</taxon>
        <taxon>Euteleostomi</taxon>
        <taxon>Amphibia</taxon>
        <taxon>Batrachia</taxon>
        <taxon>Anura</taxon>
        <taxon>Pipoidea</taxon>
        <taxon>Pipidae</taxon>
        <taxon>Xenopodinae</taxon>
        <taxon>Xenopus</taxon>
        <taxon>Xenopus</taxon>
    </lineage>
</organism>
<comment type="function">
    <text>Histones H1 are necessary for the condensation of nucleosome chains into higher-order structures.</text>
</comment>
<comment type="subcellular location">
    <subcellularLocation>
        <location>Nucleus</location>
    </subcellularLocation>
    <subcellularLocation>
        <location>Chromosome</location>
    </subcellularLocation>
</comment>
<comment type="similarity">
    <text evidence="2">Belongs to the histone H1/H5 family.</text>
</comment>
<reference key="1">
    <citation type="journal article" date="1983" name="Nucleic Acids Res.">
        <title>Nucleotide sequences of H1 histone genes from Xenopus laevis. A recently diverged pair of H1 genes and an unusual H1 pseudogene.</title>
        <authorList>
            <person name="Turner P.C."/>
            <person name="Aldridge T.C."/>
            <person name="Woodland H.R."/>
            <person name="Old R.W."/>
        </authorList>
    </citation>
    <scope>NUCLEOTIDE SEQUENCE [GENOMIC DNA]</scope>
</reference>
<proteinExistence type="inferred from homology"/>